<evidence type="ECO:0000250" key="1"/>
<evidence type="ECO:0000255" key="2">
    <source>
        <dbReference type="PROSITE-ProRule" id="PRU01182"/>
    </source>
</evidence>
<evidence type="ECO:0000269" key="3">
    <source>
    </source>
</evidence>
<evidence type="ECO:0000269" key="4">
    <source>
    </source>
</evidence>
<evidence type="ECO:0000269" key="5">
    <source>
    </source>
</evidence>
<evidence type="ECO:0000269" key="6">
    <source>
    </source>
</evidence>
<evidence type="ECO:0000269" key="7">
    <source>
    </source>
</evidence>
<evidence type="ECO:0000269" key="8">
    <source>
    </source>
</evidence>
<evidence type="ECO:0000269" key="9">
    <source>
    </source>
</evidence>
<evidence type="ECO:0000269" key="10">
    <source>
    </source>
</evidence>
<evidence type="ECO:0000269" key="11">
    <source>
    </source>
</evidence>
<evidence type="ECO:0000305" key="12"/>
<evidence type="ECO:0000305" key="13">
    <source>
    </source>
</evidence>
<reference key="1">
    <citation type="journal article" date="1999" name="Curr. Biol.">
        <title>The COP9 signalosome is essential for development of Drosophila melanogaster.</title>
        <authorList>
            <person name="Freilich S."/>
            <person name="Oron E."/>
            <person name="Kapp Y."/>
            <person name="Nevo-Caspi Y."/>
            <person name="Orgad S."/>
            <person name="Segal D."/>
            <person name="Chamovitz D.A."/>
        </authorList>
    </citation>
    <scope>NUCLEOTIDE SEQUENCE [MRNA]</scope>
    <scope>SUBCELLULAR LOCATION</scope>
    <scope>PROBABLE COMPOSITION OF THE CSN COMPLEX</scope>
    <scope>INTERACTION WITH CSN2</scope>
</reference>
<reference key="2">
    <citation type="journal article" date="2000" name="Science">
        <title>The genome sequence of Drosophila melanogaster.</title>
        <authorList>
            <person name="Adams M.D."/>
            <person name="Celniker S.E."/>
            <person name="Holt R.A."/>
            <person name="Evans C.A."/>
            <person name="Gocayne J.D."/>
            <person name="Amanatides P.G."/>
            <person name="Scherer S.E."/>
            <person name="Li P.W."/>
            <person name="Hoskins R.A."/>
            <person name="Galle R.F."/>
            <person name="George R.A."/>
            <person name="Lewis S.E."/>
            <person name="Richards S."/>
            <person name="Ashburner M."/>
            <person name="Henderson S.N."/>
            <person name="Sutton G.G."/>
            <person name="Wortman J.R."/>
            <person name="Yandell M.D."/>
            <person name="Zhang Q."/>
            <person name="Chen L.X."/>
            <person name="Brandon R.C."/>
            <person name="Rogers Y.-H.C."/>
            <person name="Blazej R.G."/>
            <person name="Champe M."/>
            <person name="Pfeiffer B.D."/>
            <person name="Wan K.H."/>
            <person name="Doyle C."/>
            <person name="Baxter E.G."/>
            <person name="Helt G."/>
            <person name="Nelson C.R."/>
            <person name="Miklos G.L.G."/>
            <person name="Abril J.F."/>
            <person name="Agbayani A."/>
            <person name="An H.-J."/>
            <person name="Andrews-Pfannkoch C."/>
            <person name="Baldwin D."/>
            <person name="Ballew R.M."/>
            <person name="Basu A."/>
            <person name="Baxendale J."/>
            <person name="Bayraktaroglu L."/>
            <person name="Beasley E.M."/>
            <person name="Beeson K.Y."/>
            <person name="Benos P.V."/>
            <person name="Berman B.P."/>
            <person name="Bhandari D."/>
            <person name="Bolshakov S."/>
            <person name="Borkova D."/>
            <person name="Botchan M.R."/>
            <person name="Bouck J."/>
            <person name="Brokstein P."/>
            <person name="Brottier P."/>
            <person name="Burtis K.C."/>
            <person name="Busam D.A."/>
            <person name="Butler H."/>
            <person name="Cadieu E."/>
            <person name="Center A."/>
            <person name="Chandra I."/>
            <person name="Cherry J.M."/>
            <person name="Cawley S."/>
            <person name="Dahlke C."/>
            <person name="Davenport L.B."/>
            <person name="Davies P."/>
            <person name="de Pablos B."/>
            <person name="Delcher A."/>
            <person name="Deng Z."/>
            <person name="Mays A.D."/>
            <person name="Dew I."/>
            <person name="Dietz S.M."/>
            <person name="Dodson K."/>
            <person name="Doup L.E."/>
            <person name="Downes M."/>
            <person name="Dugan-Rocha S."/>
            <person name="Dunkov B.C."/>
            <person name="Dunn P."/>
            <person name="Durbin K.J."/>
            <person name="Evangelista C.C."/>
            <person name="Ferraz C."/>
            <person name="Ferriera S."/>
            <person name="Fleischmann W."/>
            <person name="Fosler C."/>
            <person name="Gabrielian A.E."/>
            <person name="Garg N.S."/>
            <person name="Gelbart W.M."/>
            <person name="Glasser K."/>
            <person name="Glodek A."/>
            <person name="Gong F."/>
            <person name="Gorrell J.H."/>
            <person name="Gu Z."/>
            <person name="Guan P."/>
            <person name="Harris M."/>
            <person name="Harris N.L."/>
            <person name="Harvey D.A."/>
            <person name="Heiman T.J."/>
            <person name="Hernandez J.R."/>
            <person name="Houck J."/>
            <person name="Hostin D."/>
            <person name="Houston K.A."/>
            <person name="Howland T.J."/>
            <person name="Wei M.-H."/>
            <person name="Ibegwam C."/>
            <person name="Jalali M."/>
            <person name="Kalush F."/>
            <person name="Karpen G.H."/>
            <person name="Ke Z."/>
            <person name="Kennison J.A."/>
            <person name="Ketchum K.A."/>
            <person name="Kimmel B.E."/>
            <person name="Kodira C.D."/>
            <person name="Kraft C.L."/>
            <person name="Kravitz S."/>
            <person name="Kulp D."/>
            <person name="Lai Z."/>
            <person name="Lasko P."/>
            <person name="Lei Y."/>
            <person name="Levitsky A.A."/>
            <person name="Li J.H."/>
            <person name="Li Z."/>
            <person name="Liang Y."/>
            <person name="Lin X."/>
            <person name="Liu X."/>
            <person name="Mattei B."/>
            <person name="McIntosh T.C."/>
            <person name="McLeod M.P."/>
            <person name="McPherson D."/>
            <person name="Merkulov G."/>
            <person name="Milshina N.V."/>
            <person name="Mobarry C."/>
            <person name="Morris J."/>
            <person name="Moshrefi A."/>
            <person name="Mount S.M."/>
            <person name="Moy M."/>
            <person name="Murphy B."/>
            <person name="Murphy L."/>
            <person name="Muzny D.M."/>
            <person name="Nelson D.L."/>
            <person name="Nelson D.R."/>
            <person name="Nelson K.A."/>
            <person name="Nixon K."/>
            <person name="Nusskern D.R."/>
            <person name="Pacleb J.M."/>
            <person name="Palazzolo M."/>
            <person name="Pittman G.S."/>
            <person name="Pan S."/>
            <person name="Pollard J."/>
            <person name="Puri V."/>
            <person name="Reese M.G."/>
            <person name="Reinert K."/>
            <person name="Remington K."/>
            <person name="Saunders R.D.C."/>
            <person name="Scheeler F."/>
            <person name="Shen H."/>
            <person name="Shue B.C."/>
            <person name="Siden-Kiamos I."/>
            <person name="Simpson M."/>
            <person name="Skupski M.P."/>
            <person name="Smith T.J."/>
            <person name="Spier E."/>
            <person name="Spradling A.C."/>
            <person name="Stapleton M."/>
            <person name="Strong R."/>
            <person name="Sun E."/>
            <person name="Svirskas R."/>
            <person name="Tector C."/>
            <person name="Turner R."/>
            <person name="Venter E."/>
            <person name="Wang A.H."/>
            <person name="Wang X."/>
            <person name="Wang Z.-Y."/>
            <person name="Wassarman D.A."/>
            <person name="Weinstock G.M."/>
            <person name="Weissenbach J."/>
            <person name="Williams S.M."/>
            <person name="Woodage T."/>
            <person name="Worley K.C."/>
            <person name="Wu D."/>
            <person name="Yang S."/>
            <person name="Yao Q.A."/>
            <person name="Ye J."/>
            <person name="Yeh R.-F."/>
            <person name="Zaveri J.S."/>
            <person name="Zhan M."/>
            <person name="Zhang G."/>
            <person name="Zhao Q."/>
            <person name="Zheng L."/>
            <person name="Zheng X.H."/>
            <person name="Zhong F.N."/>
            <person name="Zhong W."/>
            <person name="Zhou X."/>
            <person name="Zhu S.C."/>
            <person name="Zhu X."/>
            <person name="Smith H.O."/>
            <person name="Gibbs R.A."/>
            <person name="Myers E.W."/>
            <person name="Rubin G.M."/>
            <person name="Venter J.C."/>
        </authorList>
    </citation>
    <scope>NUCLEOTIDE SEQUENCE [LARGE SCALE GENOMIC DNA]</scope>
    <source>
        <strain>Berkeley</strain>
    </source>
</reference>
<reference key="3">
    <citation type="journal article" date="2002" name="Genome Biol.">
        <title>Annotation of the Drosophila melanogaster euchromatic genome: a systematic review.</title>
        <authorList>
            <person name="Misra S."/>
            <person name="Crosby M.A."/>
            <person name="Mungall C.J."/>
            <person name="Matthews B.B."/>
            <person name="Campbell K.S."/>
            <person name="Hradecky P."/>
            <person name="Huang Y."/>
            <person name="Kaminker J.S."/>
            <person name="Millburn G.H."/>
            <person name="Prochnik S.E."/>
            <person name="Smith C.D."/>
            <person name="Tupy J.L."/>
            <person name="Whitfield E.J."/>
            <person name="Bayraktaroglu L."/>
            <person name="Berman B.P."/>
            <person name="Bettencourt B.R."/>
            <person name="Celniker S.E."/>
            <person name="de Grey A.D.N.J."/>
            <person name="Drysdale R.A."/>
            <person name="Harris N.L."/>
            <person name="Richter J."/>
            <person name="Russo S."/>
            <person name="Schroeder A.J."/>
            <person name="Shu S.Q."/>
            <person name="Stapleton M."/>
            <person name="Yamada C."/>
            <person name="Ashburner M."/>
            <person name="Gelbart W.M."/>
            <person name="Rubin G.M."/>
            <person name="Lewis S.E."/>
        </authorList>
    </citation>
    <scope>GENOME REANNOTATION</scope>
    <source>
        <strain>Berkeley</strain>
    </source>
</reference>
<reference key="4">
    <citation type="submission" date="2003-02" db="EMBL/GenBank/DDBJ databases">
        <authorList>
            <person name="Stapleton M."/>
            <person name="Brokstein P."/>
            <person name="Hong L."/>
            <person name="Agbayani A."/>
            <person name="Carlson J.W."/>
            <person name="Champe M."/>
            <person name="Chavez C."/>
            <person name="Dorsett V."/>
            <person name="Dresnek D."/>
            <person name="Farfan D."/>
            <person name="Frise E."/>
            <person name="George R.A."/>
            <person name="Gonzalez M."/>
            <person name="Guarin H."/>
            <person name="Kronmiller B."/>
            <person name="Li P.W."/>
            <person name="Liao G."/>
            <person name="Miranda A."/>
            <person name="Mungall C.J."/>
            <person name="Nunoo J."/>
            <person name="Pacleb J.M."/>
            <person name="Paragas V."/>
            <person name="Park S."/>
            <person name="Patel S."/>
            <person name="Phouanenavong S."/>
            <person name="Wan K.H."/>
            <person name="Yu C."/>
            <person name="Lewis S.E."/>
            <person name="Rubin G.M."/>
            <person name="Celniker S.E."/>
        </authorList>
    </citation>
    <scope>NUCLEOTIDE SEQUENCE [LARGE SCALE MRNA]</scope>
    <source>
        <strain>Berkeley</strain>
        <tissue>Embryo</tissue>
    </source>
</reference>
<reference key="5">
    <citation type="journal article" date="2002" name="Development">
        <title>COP9 signalosome subunits 4 and 5 regulate multiple pleiotropic pathways in Drosophila melanogaster.</title>
        <authorList>
            <person name="Oron E."/>
            <person name="Mannervik M."/>
            <person name="Rencus S."/>
            <person name="Harari-Steinberg O."/>
            <person name="Neuman-Silberberg S."/>
            <person name="Segal D."/>
            <person name="Chamovitz D.A."/>
        </authorList>
    </citation>
    <scope>FUNCTION</scope>
    <scope>SUBUNIT</scope>
    <scope>COMPONENT OF THE CSN COMPLEX WITH CSN4 AND CSN7</scope>
</reference>
<reference key="6">
    <citation type="journal article" date="2002" name="Development">
        <title>CSN5/Jab1 mutations affect axis formation in the Drosophila oocyte by activating a meiotic checkpoint.</title>
        <authorList>
            <person name="Doronkin S."/>
            <person name="Djagaeva I."/>
            <person name="Beckendorf S.K."/>
        </authorList>
    </citation>
    <scope>FUNCTION</scope>
</reference>
<reference key="7">
    <citation type="journal article" date="2002" name="Neuron">
        <title>Drosophila JAB1/CSN5 acts in photoreceptor cells to induce glial cells.</title>
        <authorList>
            <person name="Suh G.S.B."/>
            <person name="Poeck B."/>
            <person name="Chouard T."/>
            <person name="Oron E."/>
            <person name="Segal D."/>
            <person name="Chamovitz D.A."/>
            <person name="Zipursky S.L."/>
        </authorList>
    </citation>
    <scope>FUNCTION</scope>
    <scope>MUTANTS CSN5-1; CSN5-2 AND CSN5-3</scope>
</reference>
<reference key="8">
    <citation type="journal article" date="2002" name="Oncogene">
        <title>The TRC8 hereditary kidney cancer gene suppresses growth and functions with VHL in a common pathway.</title>
        <authorList>
            <person name="Gemmill R.M."/>
            <person name="Bemis L.T."/>
            <person name="Lee J.P."/>
            <person name="Sozen M.A."/>
            <person name="Baron A."/>
            <person name="Zeng C."/>
            <person name="Erickson P.F."/>
            <person name="Hooper J.E."/>
            <person name="Drabkin H.A."/>
        </authorList>
    </citation>
    <scope>INTERACTION WITH TRC8</scope>
</reference>
<reference key="9">
    <citation type="journal article" date="2002" name="Science">
        <title>Role of predicted metalloprotease motif of Jab1/Csn5 in cleavage of Nedd8 from Cul1.</title>
        <authorList>
            <person name="Cope G.A."/>
            <person name="Suh G.S.B."/>
            <person name="Aravind L."/>
            <person name="Schwarz S.E."/>
            <person name="Zipursky S.L."/>
            <person name="Koonin E.V."/>
            <person name="Deshaies R.J."/>
        </authorList>
    </citation>
    <scope>FUNCTION</scope>
    <scope>ENZYME ACTIVITY</scope>
    <scope>COFACTOR</scope>
    <scope>MUTAGENESIS OF HIS-135; HIS-137 AND ASP-148</scope>
</reference>
<reference key="10">
    <citation type="journal article" date="2003" name="Dev. Cell">
        <title>The COP9 signalosome promotes degradation of Cyclin E during early Drosophila oogenesis.</title>
        <authorList>
            <person name="Doronkin S."/>
            <person name="Djagaeva I."/>
            <person name="Beckendorf S.K."/>
        </authorList>
    </citation>
    <scope>FUNCTION OF CSN COMPLEX</scope>
</reference>
<reference key="11">
    <citation type="journal article" date="2005" name="Oncogene">
        <title>Growth suppression induced by the TRC8 hereditary kidney cancer gene is dependent upon JAB1/CSN5.</title>
        <authorList>
            <person name="Gemmill R.M."/>
            <person name="Lee J.P."/>
            <person name="Chamovitz D.A."/>
            <person name="Segal D."/>
            <person name="Hooper J.E."/>
            <person name="Drabkin H.A."/>
        </authorList>
    </citation>
    <scope>MUTAGENESIS OF THR-100</scope>
</reference>
<reference key="12">
    <citation type="journal article" date="2008" name="J. Proteome Res.">
        <title>Phosphoproteome analysis of Drosophila melanogaster embryos.</title>
        <authorList>
            <person name="Zhai B."/>
            <person name="Villen J."/>
            <person name="Beausoleil S.A."/>
            <person name="Mintseris J."/>
            <person name="Gygi S.P."/>
        </authorList>
    </citation>
    <scope>PHOSPHORYLATION [LARGE SCALE ANALYSIS] AT SER-300; SER-302 AND THR-303</scope>
    <scope>IDENTIFICATION BY MASS SPECTROMETRY</scope>
    <source>
        <tissue>Embryo</tissue>
    </source>
</reference>
<feature type="chain" id="PRO_0000194841" description="COP9 signalosome complex subunit 5">
    <location>
        <begin position="1"/>
        <end position="327"/>
    </location>
</feature>
<feature type="domain" description="MPN" evidence="2">
    <location>
        <begin position="52"/>
        <end position="189"/>
    </location>
</feature>
<feature type="short sequence motif" description="JAMM motif" evidence="2">
    <location>
        <begin position="135"/>
        <end position="148"/>
    </location>
</feature>
<feature type="binding site" evidence="2">
    <location>
        <position position="135"/>
    </location>
    <ligand>
        <name>Zn(2+)</name>
        <dbReference type="ChEBI" id="CHEBI:29105"/>
        <note>catalytic</note>
    </ligand>
</feature>
<feature type="binding site" evidence="2">
    <location>
        <position position="137"/>
    </location>
    <ligand>
        <name>Zn(2+)</name>
        <dbReference type="ChEBI" id="CHEBI:29105"/>
        <note>catalytic</note>
    </ligand>
</feature>
<feature type="binding site" evidence="2">
    <location>
        <position position="148"/>
    </location>
    <ligand>
        <name>Zn(2+)</name>
        <dbReference type="ChEBI" id="CHEBI:29105"/>
        <note>catalytic</note>
    </ligand>
</feature>
<feature type="modified residue" description="Phosphoserine" evidence="11">
    <location>
        <position position="300"/>
    </location>
</feature>
<feature type="modified residue" description="Phosphoserine" evidence="11">
    <location>
        <position position="302"/>
    </location>
</feature>
<feature type="modified residue" description="Phosphothreonine" evidence="11">
    <location>
        <position position="303"/>
    </location>
</feature>
<feature type="mutagenesis site" description="In csn5-3; disrupts R cell projections. Impairs the interaction with Trc8." evidence="10">
    <original>T</original>
    <variation>I</variation>
    <location>
        <position position="100"/>
    </location>
</feature>
<feature type="mutagenesis site" description="Abolishes ability to deneddylate cul1." evidence="6">
    <original>H</original>
    <variation>A</variation>
    <location>
        <position position="135"/>
    </location>
</feature>
<feature type="mutagenesis site" description="Abolishes ability to deneddylate cul1." evidence="6">
    <original>H</original>
    <variation>A</variation>
    <location>
        <position position="137"/>
    </location>
</feature>
<feature type="mutagenesis site" description="In csn5-2; disrupts R cell projections.">
    <original>G</original>
    <variation>D</variation>
    <location>
        <position position="146"/>
    </location>
</feature>
<feature type="mutagenesis site" description="Abolishes ability to deneddylate cul1." evidence="6">
    <original>D</original>
    <variation>N</variation>
    <location>
        <position position="148"/>
    </location>
</feature>
<feature type="mutagenesis site" description="In csn5-1; disrupts R cell projections.">
    <original>E</original>
    <variation>V</variation>
    <location>
        <position position="160"/>
    </location>
</feature>
<feature type="sequence conflict" description="In Ref. 1; AAD28608." evidence="12" ref="1">
    <original>E</original>
    <variation>K</variation>
    <location>
        <position position="112"/>
    </location>
</feature>
<feature type="sequence conflict" description="In Ref. 1; AAD28608." evidence="12" ref="1">
    <original>E</original>
    <variation>K</variation>
    <location>
        <position position="123"/>
    </location>
</feature>
<feature type="sequence conflict" description="In Ref. 1; AAD28608." evidence="12" ref="1">
    <original>D</original>
    <variation>N</variation>
    <location>
        <position position="148"/>
    </location>
</feature>
<accession>Q9XZ58</accession>
<accession>Q7KN57</accession>
<accession>Q9UB04</accession>
<comment type="function">
    <text evidence="4 6 7 8 9">Probable protease subunit of the COP9 signalosome complex (CSN), a complex involved in various cellular and developmental processes. The CSN complex is an essential regulator of the ubiquitin (Ubl) conjugation pathway by mediating the deneddylation of the cullin subunits of the SCF-type E3 ligase complexes, leading to decrease the Ubl ligase activity of SCF. In the complex, it probably acts as the catalytic center that mediates the cleavage of Nedd8 from cullins. It however has no metalloprotease activity by itself and requires the other subunits of the CSN complex. The CSN complex plays an essential role in oogenesis and embryogenesis and is required for proper photoreceptor R cell differentiation and promote lamina glial cell migration or axon targeting. It also promotes Ubl-dependent degradation of cyclin E (CycE) during early oogenesis. Also involved in regulation of axis formation by checkpoint-dependent, translational control of Gurken.</text>
</comment>
<comment type="cofactor">
    <cofactor evidence="6">
        <name>a divalent metal cation</name>
        <dbReference type="ChEBI" id="CHEBI:60240"/>
    </cofactor>
</comment>
<comment type="subunit">
    <text evidence="3 5 7">Component of the CSN complex, probably composed of CSN1b, alien/CSN2, CSN3, CSN4, CSN5, CSN6, CSN7 and CSN8. Interacts directly with CSN2. Also exists as monomeric form. Interacts via its MPN domain with Trc8.</text>
</comment>
<comment type="interaction">
    <interactant intactId="EBI-97187">
        <id>Q9XZ58</id>
    </interactant>
    <interactant intactId="EBI-141466">
        <id>Q9V345</id>
        <label>CSN4</label>
    </interactant>
    <organismsDiffer>false</organismsDiffer>
    <experiments>2</experiments>
</comment>
<comment type="interaction">
    <interactant intactId="EBI-97187">
        <id>Q9XZ58</id>
    </interactant>
    <interactant intactId="EBI-183494">
        <id>Q9VCY3</id>
        <label>CSN6</label>
    </interactant>
    <organismsDiffer>false</organismsDiffer>
    <experiments>3</experiments>
</comment>
<comment type="interaction">
    <interactant intactId="EBI-97187">
        <id>Q9XZ58</id>
    </interactant>
    <interactant intactId="EBI-1011633">
        <id>Q7KRW1</id>
        <label>Trc8</label>
    </interactant>
    <organismsDiffer>false</organismsDiffer>
    <experiments>3</experiments>
</comment>
<comment type="subcellular location">
    <subcellularLocation>
        <location evidence="13">Cytoplasm</location>
    </subcellularLocation>
    <subcellularLocation>
        <location evidence="13">Nucleus</location>
    </subcellularLocation>
</comment>
<comment type="tissue specificity">
    <text>Expressed in the optic lobe neuropil.</text>
</comment>
<comment type="domain">
    <text evidence="1">The JAMM motif is essential for the protease activity of the CSN complex resulting in deneddylation of cullins. It constitutes the catalytic center of the complex (By similarity).</text>
</comment>
<comment type="similarity">
    <text evidence="12">Belongs to the peptidase M67A family. CSN5 subfamily.</text>
</comment>
<comment type="sequence caution" evidence="12">
    <conflict type="erroneous initiation">
        <sequence resource="EMBL-CDS" id="AAD27862"/>
    </conflict>
</comment>
<sequence length="327" mass="37083">MDSDAAQKTWELENNIQTLPSCDEIFRYDAEQQRQIIDAKPWEKDPHFFKDIKISALALLKMVMHARSGGTLEVMGLMLGKVEDNTMIVMDAFALPVEGTETRVNAQAQAYEYMTAYMEAAKEVGRMEHAVGWYHSHPGYGCWLSGIDVSTQMLNQTYQEPFVAIVVDPVRTVSAGKVCLGAFRTYPKGYKPPNEEPSEYQTIPLNKIEDFGVHCKQYYPLEISYFKSALDRRLLDSLWNKYWVNTLGSSGLLTNTEYTTGQIMDLSEKLEQSENFLGRGTDVNEKRSEDKLSKATRDCSRSTIELIHGLMAQIVKDKLFNKVGLGK</sequence>
<dbReference type="EC" id="3.4.-.-"/>
<dbReference type="EMBL" id="AF129083">
    <property type="protein sequence ID" value="AAD28608.1"/>
    <property type="molecule type" value="mRNA"/>
</dbReference>
<dbReference type="EMBL" id="AE014297">
    <property type="protein sequence ID" value="AAF55321.1"/>
    <property type="molecule type" value="Genomic_DNA"/>
</dbReference>
<dbReference type="EMBL" id="AF132563">
    <property type="protein sequence ID" value="AAD27862.2"/>
    <property type="status" value="ALT_INIT"/>
    <property type="molecule type" value="mRNA"/>
</dbReference>
<dbReference type="RefSeq" id="NP_477442.1">
    <property type="nucleotide sequence ID" value="NM_058094.5"/>
</dbReference>
<dbReference type="SMR" id="Q9XZ58"/>
<dbReference type="BioGRID" id="67045">
    <property type="interactions" value="19"/>
</dbReference>
<dbReference type="ComplexPortal" id="CPX-7964">
    <property type="entry name" value="COP9 signalosome complex, testis-specific variant"/>
</dbReference>
<dbReference type="ComplexPortal" id="CPX-7974">
    <property type="entry name" value="COP9 signalosome complex"/>
</dbReference>
<dbReference type="DIP" id="DIP-22022N"/>
<dbReference type="FunCoup" id="Q9XZ58">
    <property type="interactions" value="2881"/>
</dbReference>
<dbReference type="IntAct" id="Q9XZ58">
    <property type="interactions" value="13"/>
</dbReference>
<dbReference type="STRING" id="7227.FBpp0082743"/>
<dbReference type="MEROPS" id="M67.A13"/>
<dbReference type="iPTMnet" id="Q9XZ58"/>
<dbReference type="PaxDb" id="7227-FBpp0082743"/>
<dbReference type="EnsemblMetazoa" id="FBtr0083292">
    <property type="protein sequence ID" value="FBpp0082743"/>
    <property type="gene ID" value="FBgn0027053"/>
</dbReference>
<dbReference type="GeneID" id="42000"/>
<dbReference type="KEGG" id="dme:Dmel_CG14884"/>
<dbReference type="AGR" id="FB:FBgn0027053"/>
<dbReference type="CTD" id="42000"/>
<dbReference type="FlyBase" id="FBgn0027053">
    <property type="gene designation" value="CSN5"/>
</dbReference>
<dbReference type="VEuPathDB" id="VectorBase:FBgn0027053"/>
<dbReference type="eggNOG" id="KOG1554">
    <property type="taxonomic scope" value="Eukaryota"/>
</dbReference>
<dbReference type="GeneTree" id="ENSGT00550000074850"/>
<dbReference type="HOGENOM" id="CLU_053034_0_1_1"/>
<dbReference type="InParanoid" id="Q9XZ58"/>
<dbReference type="OMA" id="VKMKLFQ"/>
<dbReference type="OrthoDB" id="10266268at2759"/>
<dbReference type="PhylomeDB" id="Q9XZ58"/>
<dbReference type="Reactome" id="R-DME-5696394">
    <property type="pathway name" value="DNA Damage Recognition in GG-NER"/>
</dbReference>
<dbReference type="Reactome" id="R-DME-6781823">
    <property type="pathway name" value="Formation of TC-NER Pre-Incision Complex"/>
</dbReference>
<dbReference type="Reactome" id="R-DME-8856825">
    <property type="pathway name" value="Cargo recognition for clathrin-mediated endocytosis"/>
</dbReference>
<dbReference type="Reactome" id="R-DME-8951664">
    <property type="pathway name" value="Neddylation"/>
</dbReference>
<dbReference type="BioGRID-ORCS" id="42000">
    <property type="hits" value="1 hit in 1 CRISPR screen"/>
</dbReference>
<dbReference type="ChiTaRS" id="CSN5">
    <property type="organism name" value="fly"/>
</dbReference>
<dbReference type="GenomeRNAi" id="42000"/>
<dbReference type="PRO" id="PR:Q9XZ58"/>
<dbReference type="Proteomes" id="UP000000803">
    <property type="component" value="Chromosome 3R"/>
</dbReference>
<dbReference type="Bgee" id="FBgn0027053">
    <property type="expression patterns" value="Expressed in cleaving embryo and 105 other cell types or tissues"/>
</dbReference>
<dbReference type="ExpressionAtlas" id="Q9XZ58">
    <property type="expression patterns" value="baseline and differential"/>
</dbReference>
<dbReference type="GO" id="GO:0008180">
    <property type="term" value="C:COP9 signalosome"/>
    <property type="evidence" value="ECO:0000314"/>
    <property type="project" value="FlyBase"/>
</dbReference>
<dbReference type="GO" id="GO:0005737">
    <property type="term" value="C:cytoplasm"/>
    <property type="evidence" value="ECO:0000314"/>
    <property type="project" value="FlyBase"/>
</dbReference>
<dbReference type="GO" id="GO:0034399">
    <property type="term" value="C:nuclear periphery"/>
    <property type="evidence" value="ECO:0000314"/>
    <property type="project" value="FlyBase"/>
</dbReference>
<dbReference type="GO" id="GO:0019784">
    <property type="term" value="F:deNEDDylase activity"/>
    <property type="evidence" value="ECO:0000318"/>
    <property type="project" value="GO_Central"/>
</dbReference>
<dbReference type="GO" id="GO:0046872">
    <property type="term" value="F:metal ion binding"/>
    <property type="evidence" value="ECO:0007669"/>
    <property type="project" value="UniProtKB-KW"/>
</dbReference>
<dbReference type="GO" id="GO:0140758">
    <property type="term" value="F:metal-dependent deNEDDylase activity"/>
    <property type="evidence" value="ECO:0000314"/>
    <property type="project" value="FlyBase"/>
</dbReference>
<dbReference type="GO" id="GO:0008237">
    <property type="term" value="F:metallopeptidase activity"/>
    <property type="evidence" value="ECO:0000318"/>
    <property type="project" value="GO_Central"/>
</dbReference>
<dbReference type="GO" id="GO:0007409">
    <property type="term" value="P:axonogenesis"/>
    <property type="evidence" value="ECO:0000315"/>
    <property type="project" value="FlyBase"/>
</dbReference>
<dbReference type="GO" id="GO:0001751">
    <property type="term" value="P:compound eye photoreceptor cell differentiation"/>
    <property type="evidence" value="ECO:0000315"/>
    <property type="project" value="FlyBase"/>
</dbReference>
<dbReference type="GO" id="GO:0036099">
    <property type="term" value="P:female germ-line stem cell population maintenance"/>
    <property type="evidence" value="ECO:0000315"/>
    <property type="project" value="FlyBase"/>
</dbReference>
<dbReference type="GO" id="GO:0007281">
    <property type="term" value="P:germ cell development"/>
    <property type="evidence" value="ECO:0000315"/>
    <property type="project" value="FlyBase"/>
</dbReference>
<dbReference type="GO" id="GO:0048142">
    <property type="term" value="P:germarium-derived cystoblast division"/>
    <property type="evidence" value="ECO:0000315"/>
    <property type="project" value="FlyBase"/>
</dbReference>
<dbReference type="GO" id="GO:0008347">
    <property type="term" value="P:glial cell migration"/>
    <property type="evidence" value="ECO:0000315"/>
    <property type="project" value="FlyBase"/>
</dbReference>
<dbReference type="GO" id="GO:0048140">
    <property type="term" value="P:male germ-line cyst encapsulation"/>
    <property type="evidence" value="ECO:0000315"/>
    <property type="project" value="FlyBase"/>
</dbReference>
<dbReference type="GO" id="GO:0035207">
    <property type="term" value="P:negative regulation of hemocyte proliferation"/>
    <property type="evidence" value="ECO:0000315"/>
    <property type="project" value="FlyBase"/>
</dbReference>
<dbReference type="GO" id="GO:0035204">
    <property type="term" value="P:negative regulation of lamellocyte differentiation"/>
    <property type="evidence" value="ECO:0000315"/>
    <property type="project" value="FlyBase"/>
</dbReference>
<dbReference type="GO" id="GO:0032435">
    <property type="term" value="P:negative regulation of proteasomal ubiquitin-dependent protein catabolic process"/>
    <property type="evidence" value="ECO:0000315"/>
    <property type="project" value="FlyBase"/>
</dbReference>
<dbReference type="GO" id="GO:0007314">
    <property type="term" value="P:oocyte anterior/posterior axis specification"/>
    <property type="evidence" value="ECO:0000315"/>
    <property type="project" value="FlyBase"/>
</dbReference>
<dbReference type="GO" id="GO:0007310">
    <property type="term" value="P:oocyte dorsal/ventral axis specification"/>
    <property type="evidence" value="ECO:0000315"/>
    <property type="project" value="FlyBase"/>
</dbReference>
<dbReference type="GO" id="GO:0045787">
    <property type="term" value="P:positive regulation of cell cycle"/>
    <property type="evidence" value="ECO:0000315"/>
    <property type="project" value="FlyBase"/>
</dbReference>
<dbReference type="GO" id="GO:0045732">
    <property type="term" value="P:positive regulation of protein catabolic process"/>
    <property type="evidence" value="ECO:0000315"/>
    <property type="project" value="FlyBase"/>
</dbReference>
<dbReference type="GO" id="GO:0000338">
    <property type="term" value="P:protein deneddylation"/>
    <property type="evidence" value="ECO:0000315"/>
    <property type="project" value="UniProtKB"/>
</dbReference>
<dbReference type="GO" id="GO:0050821">
    <property type="term" value="P:protein stabilization"/>
    <property type="evidence" value="ECO:0000315"/>
    <property type="project" value="FlyBase"/>
</dbReference>
<dbReference type="GO" id="GO:0006508">
    <property type="term" value="P:proteolysis"/>
    <property type="evidence" value="ECO:0007669"/>
    <property type="project" value="UniProtKB-KW"/>
</dbReference>
<dbReference type="GO" id="GO:0051726">
    <property type="term" value="P:regulation of cell cycle"/>
    <property type="evidence" value="ECO:0000318"/>
    <property type="project" value="GO_Central"/>
</dbReference>
<dbReference type="CDD" id="cd08069">
    <property type="entry name" value="MPN_RPN11_CSN5"/>
    <property type="match status" value="1"/>
</dbReference>
<dbReference type="FunFam" id="3.40.140.10:FF:000203">
    <property type="entry name" value="COP9 signalosome complex subunit 5"/>
    <property type="match status" value="1"/>
</dbReference>
<dbReference type="Gene3D" id="3.40.140.10">
    <property type="entry name" value="Cytidine Deaminase, domain 2"/>
    <property type="match status" value="1"/>
</dbReference>
<dbReference type="InterPro" id="IPR040961">
    <property type="entry name" value="CSN5_C"/>
</dbReference>
<dbReference type="InterPro" id="IPR000555">
    <property type="entry name" value="JAMM/MPN+_dom"/>
</dbReference>
<dbReference type="InterPro" id="IPR050242">
    <property type="entry name" value="JAMM_MPN+_peptidase_M67A"/>
</dbReference>
<dbReference type="InterPro" id="IPR037518">
    <property type="entry name" value="MPN"/>
</dbReference>
<dbReference type="PANTHER" id="PTHR10410">
    <property type="entry name" value="EUKARYOTIC TRANSLATION INITIATION FACTOR 3 -RELATED"/>
    <property type="match status" value="1"/>
</dbReference>
<dbReference type="Pfam" id="PF18323">
    <property type="entry name" value="CSN5_C"/>
    <property type="match status" value="1"/>
</dbReference>
<dbReference type="Pfam" id="PF01398">
    <property type="entry name" value="JAB"/>
    <property type="match status" value="1"/>
</dbReference>
<dbReference type="SMART" id="SM00232">
    <property type="entry name" value="JAB_MPN"/>
    <property type="match status" value="1"/>
</dbReference>
<dbReference type="SUPFAM" id="SSF102712">
    <property type="entry name" value="JAB1/MPN domain"/>
    <property type="match status" value="1"/>
</dbReference>
<dbReference type="PROSITE" id="PS50249">
    <property type="entry name" value="MPN"/>
    <property type="match status" value="1"/>
</dbReference>
<protein>
    <recommendedName>
        <fullName>COP9 signalosome complex subunit 5</fullName>
        <shortName>Dch5</shortName>
        <shortName>Signalosome subunit 5</shortName>
        <ecNumber>3.4.-.-</ecNumber>
    </recommendedName>
    <alternativeName>
        <fullName>JAB1 homolog</fullName>
    </alternativeName>
</protein>
<name>CSN5_DROME</name>
<organism>
    <name type="scientific">Drosophila melanogaster</name>
    <name type="common">Fruit fly</name>
    <dbReference type="NCBI Taxonomy" id="7227"/>
    <lineage>
        <taxon>Eukaryota</taxon>
        <taxon>Metazoa</taxon>
        <taxon>Ecdysozoa</taxon>
        <taxon>Arthropoda</taxon>
        <taxon>Hexapoda</taxon>
        <taxon>Insecta</taxon>
        <taxon>Pterygota</taxon>
        <taxon>Neoptera</taxon>
        <taxon>Endopterygota</taxon>
        <taxon>Diptera</taxon>
        <taxon>Brachycera</taxon>
        <taxon>Muscomorpha</taxon>
        <taxon>Ephydroidea</taxon>
        <taxon>Drosophilidae</taxon>
        <taxon>Drosophila</taxon>
        <taxon>Sophophora</taxon>
    </lineage>
</organism>
<proteinExistence type="evidence at protein level"/>
<gene>
    <name type="primary">CSN5</name>
    <name type="synonym">quo</name>
    <name type="ORF">CG14884</name>
</gene>
<keyword id="KW-0963">Cytoplasm</keyword>
<keyword id="KW-0217">Developmental protein</keyword>
<keyword id="KW-0221">Differentiation</keyword>
<keyword id="KW-0378">Hydrolase</keyword>
<keyword id="KW-0479">Metal-binding</keyword>
<keyword id="KW-0482">Metalloprotease</keyword>
<keyword id="KW-0539">Nucleus</keyword>
<keyword id="KW-0896">Oogenesis</keyword>
<keyword id="KW-0597">Phosphoprotein</keyword>
<keyword id="KW-0645">Protease</keyword>
<keyword id="KW-1185">Reference proteome</keyword>
<keyword id="KW-0736">Signalosome</keyword>
<keyword id="KW-0862">Zinc</keyword>